<name>RPOA_WIGBR</name>
<evidence type="ECO:0000255" key="1">
    <source>
        <dbReference type="HAMAP-Rule" id="MF_00059"/>
    </source>
</evidence>
<dbReference type="EC" id="2.7.7.6" evidence="1"/>
<dbReference type="EMBL" id="BA000021">
    <property type="protein sequence ID" value="BAC24714.1"/>
    <property type="molecule type" value="Genomic_DNA"/>
</dbReference>
<dbReference type="SMR" id="Q8D1Y8"/>
<dbReference type="STRING" id="36870.gene:10369077"/>
<dbReference type="KEGG" id="wbr:rpoA"/>
<dbReference type="eggNOG" id="COG0202">
    <property type="taxonomic scope" value="Bacteria"/>
</dbReference>
<dbReference type="HOGENOM" id="CLU_053084_0_1_6"/>
<dbReference type="OrthoDB" id="9805706at2"/>
<dbReference type="Proteomes" id="UP000000562">
    <property type="component" value="Chromosome"/>
</dbReference>
<dbReference type="GO" id="GO:0005737">
    <property type="term" value="C:cytoplasm"/>
    <property type="evidence" value="ECO:0007669"/>
    <property type="project" value="UniProtKB-ARBA"/>
</dbReference>
<dbReference type="GO" id="GO:0000428">
    <property type="term" value="C:DNA-directed RNA polymerase complex"/>
    <property type="evidence" value="ECO:0007669"/>
    <property type="project" value="UniProtKB-KW"/>
</dbReference>
<dbReference type="GO" id="GO:0003677">
    <property type="term" value="F:DNA binding"/>
    <property type="evidence" value="ECO:0007669"/>
    <property type="project" value="UniProtKB-UniRule"/>
</dbReference>
<dbReference type="GO" id="GO:0003899">
    <property type="term" value="F:DNA-directed RNA polymerase activity"/>
    <property type="evidence" value="ECO:0007669"/>
    <property type="project" value="UniProtKB-UniRule"/>
</dbReference>
<dbReference type="GO" id="GO:0046983">
    <property type="term" value="F:protein dimerization activity"/>
    <property type="evidence" value="ECO:0007669"/>
    <property type="project" value="InterPro"/>
</dbReference>
<dbReference type="GO" id="GO:0006351">
    <property type="term" value="P:DNA-templated transcription"/>
    <property type="evidence" value="ECO:0007669"/>
    <property type="project" value="UniProtKB-UniRule"/>
</dbReference>
<dbReference type="CDD" id="cd06928">
    <property type="entry name" value="RNAP_alpha_NTD"/>
    <property type="match status" value="1"/>
</dbReference>
<dbReference type="FunFam" id="1.10.150.20:FF:000001">
    <property type="entry name" value="DNA-directed RNA polymerase subunit alpha"/>
    <property type="match status" value="1"/>
</dbReference>
<dbReference type="FunFam" id="2.170.120.12:FF:000001">
    <property type="entry name" value="DNA-directed RNA polymerase subunit alpha"/>
    <property type="match status" value="1"/>
</dbReference>
<dbReference type="Gene3D" id="1.10.150.20">
    <property type="entry name" value="5' to 3' exonuclease, C-terminal subdomain"/>
    <property type="match status" value="1"/>
</dbReference>
<dbReference type="Gene3D" id="2.170.120.12">
    <property type="entry name" value="DNA-directed RNA polymerase, insert domain"/>
    <property type="match status" value="1"/>
</dbReference>
<dbReference type="Gene3D" id="3.30.1360.10">
    <property type="entry name" value="RNA polymerase, RBP11-like subunit"/>
    <property type="match status" value="1"/>
</dbReference>
<dbReference type="HAMAP" id="MF_00059">
    <property type="entry name" value="RNApol_bact_RpoA"/>
    <property type="match status" value="1"/>
</dbReference>
<dbReference type="InterPro" id="IPR011262">
    <property type="entry name" value="DNA-dir_RNA_pol_insert"/>
</dbReference>
<dbReference type="InterPro" id="IPR011263">
    <property type="entry name" value="DNA-dir_RNA_pol_RpoA/D/Rpb3"/>
</dbReference>
<dbReference type="InterPro" id="IPR011773">
    <property type="entry name" value="DNA-dir_RpoA"/>
</dbReference>
<dbReference type="InterPro" id="IPR036603">
    <property type="entry name" value="RBP11-like"/>
</dbReference>
<dbReference type="InterPro" id="IPR011260">
    <property type="entry name" value="RNAP_asu_C"/>
</dbReference>
<dbReference type="InterPro" id="IPR036643">
    <property type="entry name" value="RNApol_insert_sf"/>
</dbReference>
<dbReference type="NCBIfam" id="NF003513">
    <property type="entry name" value="PRK05182.1-2"/>
    <property type="match status" value="1"/>
</dbReference>
<dbReference type="NCBIfam" id="NF003519">
    <property type="entry name" value="PRK05182.2-5"/>
    <property type="match status" value="1"/>
</dbReference>
<dbReference type="NCBIfam" id="TIGR02027">
    <property type="entry name" value="rpoA"/>
    <property type="match status" value="1"/>
</dbReference>
<dbReference type="Pfam" id="PF01000">
    <property type="entry name" value="RNA_pol_A_bac"/>
    <property type="match status" value="1"/>
</dbReference>
<dbReference type="Pfam" id="PF03118">
    <property type="entry name" value="RNA_pol_A_CTD"/>
    <property type="match status" value="1"/>
</dbReference>
<dbReference type="Pfam" id="PF01193">
    <property type="entry name" value="RNA_pol_L"/>
    <property type="match status" value="1"/>
</dbReference>
<dbReference type="SMART" id="SM00662">
    <property type="entry name" value="RPOLD"/>
    <property type="match status" value="1"/>
</dbReference>
<dbReference type="SUPFAM" id="SSF47789">
    <property type="entry name" value="C-terminal domain of RNA polymerase alpha subunit"/>
    <property type="match status" value="1"/>
</dbReference>
<dbReference type="SUPFAM" id="SSF56553">
    <property type="entry name" value="Insert subdomain of RNA polymerase alpha subunit"/>
    <property type="match status" value="1"/>
</dbReference>
<dbReference type="SUPFAM" id="SSF55257">
    <property type="entry name" value="RBP11-like subunits of RNA polymerase"/>
    <property type="match status" value="1"/>
</dbReference>
<proteinExistence type="inferred from homology"/>
<reference key="1">
    <citation type="journal article" date="2002" name="Nat. Genet.">
        <title>Genome sequence of the endocellular obligate symbiont of tsetse flies, Wigglesworthia glossinidia.</title>
        <authorList>
            <person name="Akman L."/>
            <person name="Yamashita A."/>
            <person name="Watanabe H."/>
            <person name="Oshima K."/>
            <person name="Shiba T."/>
            <person name="Hattori M."/>
            <person name="Aksoy S."/>
        </authorList>
    </citation>
    <scope>NUCLEOTIDE SEQUENCE [LARGE SCALE GENOMIC DNA]</scope>
</reference>
<protein>
    <recommendedName>
        <fullName evidence="1">DNA-directed RNA polymerase subunit alpha</fullName>
        <shortName evidence="1">RNAP subunit alpha</shortName>
        <ecNumber evidence="1">2.7.7.6</ecNumber>
    </recommendedName>
    <alternativeName>
        <fullName evidence="1">RNA polymerase subunit alpha</fullName>
    </alternativeName>
    <alternativeName>
        <fullName evidence="1">Transcriptase subunit alpha</fullName>
    </alternativeName>
</protein>
<feature type="chain" id="PRO_0000175420" description="DNA-directed RNA polymerase subunit alpha">
    <location>
        <begin position="1"/>
        <end position="328"/>
    </location>
</feature>
<feature type="region of interest" description="Alpha N-terminal domain (alpha-NTD)" evidence="1">
    <location>
        <begin position="1"/>
        <end position="233"/>
    </location>
</feature>
<feature type="region of interest" description="Alpha C-terminal domain (alpha-CTD)" evidence="1">
    <location>
        <begin position="247"/>
        <end position="328"/>
    </location>
</feature>
<gene>
    <name evidence="1" type="primary">rpoA</name>
    <name type="ordered locus">WIGBR5680</name>
</gene>
<organism>
    <name type="scientific">Wigglesworthia glossinidia brevipalpis</name>
    <dbReference type="NCBI Taxonomy" id="36870"/>
    <lineage>
        <taxon>Bacteria</taxon>
        <taxon>Pseudomonadati</taxon>
        <taxon>Pseudomonadota</taxon>
        <taxon>Gammaproteobacteria</taxon>
        <taxon>Enterobacterales</taxon>
        <taxon>Erwiniaceae</taxon>
        <taxon>Wigglesworthia</taxon>
    </lineage>
</organism>
<comment type="function">
    <text evidence="1">DNA-dependent RNA polymerase catalyzes the transcription of DNA into RNA using the four ribonucleoside triphosphates as substrates.</text>
</comment>
<comment type="catalytic activity">
    <reaction evidence="1">
        <text>RNA(n) + a ribonucleoside 5'-triphosphate = RNA(n+1) + diphosphate</text>
        <dbReference type="Rhea" id="RHEA:21248"/>
        <dbReference type="Rhea" id="RHEA-COMP:14527"/>
        <dbReference type="Rhea" id="RHEA-COMP:17342"/>
        <dbReference type="ChEBI" id="CHEBI:33019"/>
        <dbReference type="ChEBI" id="CHEBI:61557"/>
        <dbReference type="ChEBI" id="CHEBI:140395"/>
        <dbReference type="EC" id="2.7.7.6"/>
    </reaction>
</comment>
<comment type="subunit">
    <text evidence="1">Homodimer. The RNAP catalytic core consists of 2 alpha, 1 beta, 1 beta' and 1 omega subunit. When a sigma factor is associated with the core the holoenzyme is formed, which can initiate transcription.</text>
</comment>
<comment type="domain">
    <text evidence="1">The N-terminal domain is essential for RNAP assembly and basal transcription, whereas the C-terminal domain is involved in interaction with transcriptional regulators and with upstream promoter elements.</text>
</comment>
<comment type="similarity">
    <text evidence="1">Belongs to the RNA polymerase alpha chain family.</text>
</comment>
<sequence length="328" mass="36928">MHNSATEFLKPRLVDIEQISKTHAKITLEPLERGFGHTLGNALRRILLSSMPGYAVTEVEIDGILHEYSSKEGVQEDIVEILLNLKELALIIKGKDIAVLSLFKSGIGKVTASDIIHDGNVEICHPEHVLCNLTHENSSINMRIKVQKGRGYVPAISRMHIEDRPIGRLLLDACYSPIERISYNVEAARVEQRTDLDKLIIEMETNGTIDPESAIRRAATILSEQLEAFIDLRDIRKPEIKEEKPEFDPVLLRPVDDLELTVRSANCLKAESIHYIGDLVQRTEVELLKTPNLGKKSLTEIKDVLSTRNLTLGMRIENWPPVSILKND</sequence>
<accession>Q8D1Y8</accession>
<keyword id="KW-0240">DNA-directed RNA polymerase</keyword>
<keyword id="KW-0548">Nucleotidyltransferase</keyword>
<keyword id="KW-1185">Reference proteome</keyword>
<keyword id="KW-0804">Transcription</keyword>
<keyword id="KW-0808">Transferase</keyword>